<keyword id="KW-0003">3Fe-4S</keyword>
<keyword id="KW-0004">4Fe-4S</keyword>
<keyword id="KW-0249">Electron transport</keyword>
<keyword id="KW-0408">Iron</keyword>
<keyword id="KW-0411">Iron-sulfur</keyword>
<keyword id="KW-0479">Metal-binding</keyword>
<keyword id="KW-1185">Reference proteome</keyword>
<keyword id="KW-0677">Repeat</keyword>
<keyword id="KW-0813">Transport</keyword>
<proteinExistence type="inferred from homology"/>
<evidence type="ECO:0000250" key="1"/>
<evidence type="ECO:0000255" key="2">
    <source>
        <dbReference type="PROSITE-ProRule" id="PRU00711"/>
    </source>
</evidence>
<organism>
    <name type="scientific">Pseudomonas putida (strain ATCC 47054 / DSM 6125 / CFBP 8728 / NCIMB 11950 / KT2440)</name>
    <dbReference type="NCBI Taxonomy" id="160488"/>
    <lineage>
        <taxon>Bacteria</taxon>
        <taxon>Pseudomonadati</taxon>
        <taxon>Pseudomonadota</taxon>
        <taxon>Gammaproteobacteria</taxon>
        <taxon>Pseudomonadales</taxon>
        <taxon>Pseudomonadaceae</taxon>
        <taxon>Pseudomonas</taxon>
    </lineage>
</organism>
<comment type="function">
    <text evidence="1">Ferredoxins are iron-sulfur proteins that transfer electrons in a wide variety of metabolic reactions.</text>
</comment>
<comment type="cofactor">
    <cofactor evidence="1">
        <name>[4Fe-4S] cluster</name>
        <dbReference type="ChEBI" id="CHEBI:49883"/>
    </cofactor>
    <text evidence="1">Binds 1 [4Fe-4S] cluster.</text>
</comment>
<comment type="cofactor">
    <cofactor evidence="1">
        <name>[3Fe-4S] cluster</name>
        <dbReference type="ChEBI" id="CHEBI:21137"/>
    </cofactor>
    <text evidence="1">Binds 1 [3Fe-4S] cluster.</text>
</comment>
<feature type="initiator methionine" description="Removed" evidence="1">
    <location>
        <position position="1"/>
    </location>
</feature>
<feature type="chain" id="PRO_0000159105" description="Ferredoxin 1">
    <location>
        <begin position="2"/>
        <end position="107"/>
    </location>
</feature>
<feature type="domain" description="4Fe-4S ferredoxin-type 1" evidence="2">
    <location>
        <begin position="2"/>
        <end position="30"/>
    </location>
</feature>
<feature type="domain" description="4Fe-4S ferredoxin-type 2" evidence="2">
    <location>
        <begin position="31"/>
        <end position="60"/>
    </location>
</feature>
<feature type="binding site" evidence="1">
    <location>
        <position position="9"/>
    </location>
    <ligand>
        <name>[3Fe-4S] cluster</name>
        <dbReference type="ChEBI" id="CHEBI:21137"/>
    </ligand>
</feature>
<feature type="binding site" evidence="1">
    <location>
        <position position="17"/>
    </location>
    <ligand>
        <name>[3Fe-4S] cluster</name>
        <dbReference type="ChEBI" id="CHEBI:21137"/>
    </ligand>
</feature>
<feature type="binding site" evidence="1">
    <location>
        <position position="21"/>
    </location>
    <ligand>
        <name>[4Fe-4S] cluster</name>
        <dbReference type="ChEBI" id="CHEBI:49883"/>
    </ligand>
</feature>
<feature type="binding site" evidence="1">
    <location>
        <position position="40"/>
    </location>
    <ligand>
        <name>[4Fe-4S] cluster</name>
        <dbReference type="ChEBI" id="CHEBI:49883"/>
    </ligand>
</feature>
<feature type="binding site" evidence="1">
    <location>
        <position position="43"/>
    </location>
    <ligand>
        <name>[4Fe-4S] cluster</name>
        <dbReference type="ChEBI" id="CHEBI:49883"/>
    </ligand>
</feature>
<feature type="binding site" evidence="1">
    <location>
        <position position="46"/>
    </location>
    <ligand>
        <name>[4Fe-4S] cluster</name>
        <dbReference type="ChEBI" id="CHEBI:49883"/>
    </ligand>
</feature>
<feature type="binding site" evidence="1">
    <location>
        <position position="50"/>
    </location>
    <ligand>
        <name>[3Fe-4S] cluster</name>
        <dbReference type="ChEBI" id="CHEBI:21137"/>
    </ligand>
</feature>
<sequence length="107" mass="12048">MTFVVTDNCIKCKYTDCVEVCPVDCFYEGPNFLVIHPDECIDCALCEPECPAQAIFSEDEVPSGMENFIELNAELAEIWPNITERKDALPDAEEWDGKPGKIADLER</sequence>
<name>FER1_PSEPK</name>
<dbReference type="EMBL" id="AE015451">
    <property type="protein sequence ID" value="AAN67246.1"/>
    <property type="molecule type" value="Genomic_DNA"/>
</dbReference>
<dbReference type="RefSeq" id="NP_743782.1">
    <property type="nucleotide sequence ID" value="NC_002947.4"/>
</dbReference>
<dbReference type="RefSeq" id="WP_003252355.1">
    <property type="nucleotide sequence ID" value="NZ_CP169744.1"/>
</dbReference>
<dbReference type="SMR" id="P0A122"/>
<dbReference type="STRING" id="160488.PP_1625"/>
<dbReference type="PaxDb" id="160488-PP_1625"/>
<dbReference type="GeneID" id="90538313"/>
<dbReference type="KEGG" id="ppu:PP_1625"/>
<dbReference type="PATRIC" id="fig|160488.4.peg.1717"/>
<dbReference type="eggNOG" id="COG1146">
    <property type="taxonomic scope" value="Bacteria"/>
</dbReference>
<dbReference type="HOGENOM" id="CLU_139698_0_0_6"/>
<dbReference type="OrthoDB" id="9803397at2"/>
<dbReference type="PhylomeDB" id="P0A122"/>
<dbReference type="BioCyc" id="PPUT160488:G1G01-1723-MONOMER"/>
<dbReference type="Proteomes" id="UP000000556">
    <property type="component" value="Chromosome"/>
</dbReference>
<dbReference type="GO" id="GO:0051538">
    <property type="term" value="F:3 iron, 4 sulfur cluster binding"/>
    <property type="evidence" value="ECO:0007669"/>
    <property type="project" value="UniProtKB-KW"/>
</dbReference>
<dbReference type="GO" id="GO:0051539">
    <property type="term" value="F:4 iron, 4 sulfur cluster binding"/>
    <property type="evidence" value="ECO:0007669"/>
    <property type="project" value="UniProtKB-KW"/>
</dbReference>
<dbReference type="GO" id="GO:0009055">
    <property type="term" value="F:electron transfer activity"/>
    <property type="evidence" value="ECO:0007669"/>
    <property type="project" value="InterPro"/>
</dbReference>
<dbReference type="GO" id="GO:0046872">
    <property type="term" value="F:metal ion binding"/>
    <property type="evidence" value="ECO:0007669"/>
    <property type="project" value="UniProtKB-KW"/>
</dbReference>
<dbReference type="Gene3D" id="3.30.70.20">
    <property type="match status" value="1"/>
</dbReference>
<dbReference type="InterPro" id="IPR017896">
    <property type="entry name" value="4Fe4S_Fe-S-bd"/>
</dbReference>
<dbReference type="InterPro" id="IPR017900">
    <property type="entry name" value="4Fe4S_Fe_S_CS"/>
</dbReference>
<dbReference type="InterPro" id="IPR000813">
    <property type="entry name" value="7Fe_ferredoxin"/>
</dbReference>
<dbReference type="InterPro" id="IPR022569">
    <property type="entry name" value="Fd_C"/>
</dbReference>
<dbReference type="InterPro" id="IPR054829">
    <property type="entry name" value="FdxA"/>
</dbReference>
<dbReference type="InterPro" id="IPR050294">
    <property type="entry name" value="RnfB_subfamily"/>
</dbReference>
<dbReference type="NCBIfam" id="NF045490">
    <property type="entry name" value="FdxA_Protbact"/>
    <property type="match status" value="1"/>
</dbReference>
<dbReference type="PANTHER" id="PTHR42859:SF2">
    <property type="entry name" value="FERREDOXIN"/>
    <property type="match status" value="1"/>
</dbReference>
<dbReference type="PANTHER" id="PTHR42859">
    <property type="entry name" value="OXIDOREDUCTASE"/>
    <property type="match status" value="1"/>
</dbReference>
<dbReference type="Pfam" id="PF11953">
    <property type="entry name" value="DUF3470"/>
    <property type="match status" value="1"/>
</dbReference>
<dbReference type="Pfam" id="PF00037">
    <property type="entry name" value="Fer4"/>
    <property type="match status" value="1"/>
</dbReference>
<dbReference type="PRINTS" id="PR00354">
    <property type="entry name" value="7FE8SFRDOXIN"/>
</dbReference>
<dbReference type="SUPFAM" id="SSF54862">
    <property type="entry name" value="4Fe-4S ferredoxins"/>
    <property type="match status" value="1"/>
</dbReference>
<dbReference type="PROSITE" id="PS00198">
    <property type="entry name" value="4FE4S_FER_1"/>
    <property type="match status" value="1"/>
</dbReference>
<dbReference type="PROSITE" id="PS51379">
    <property type="entry name" value="4FE4S_FER_2"/>
    <property type="match status" value="2"/>
</dbReference>
<reference key="1">
    <citation type="journal article" date="2002" name="Environ. Microbiol.">
        <title>Complete genome sequence and comparative analysis of the metabolically versatile Pseudomonas putida KT2440.</title>
        <authorList>
            <person name="Nelson K.E."/>
            <person name="Weinel C."/>
            <person name="Paulsen I.T."/>
            <person name="Dodson R.J."/>
            <person name="Hilbert H."/>
            <person name="Martins dos Santos V.A.P."/>
            <person name="Fouts D.E."/>
            <person name="Gill S.R."/>
            <person name="Pop M."/>
            <person name="Holmes M."/>
            <person name="Brinkac L.M."/>
            <person name="Beanan M.J."/>
            <person name="DeBoy R.T."/>
            <person name="Daugherty S.C."/>
            <person name="Kolonay J.F."/>
            <person name="Madupu R."/>
            <person name="Nelson W.C."/>
            <person name="White O."/>
            <person name="Peterson J.D."/>
            <person name="Khouri H.M."/>
            <person name="Hance I."/>
            <person name="Chris Lee P."/>
            <person name="Holtzapple E.K."/>
            <person name="Scanlan D."/>
            <person name="Tran K."/>
            <person name="Moazzez A."/>
            <person name="Utterback T.R."/>
            <person name="Rizzo M."/>
            <person name="Lee K."/>
            <person name="Kosack D."/>
            <person name="Moestl D."/>
            <person name="Wedler H."/>
            <person name="Lauber J."/>
            <person name="Stjepandic D."/>
            <person name="Hoheisel J."/>
            <person name="Straetz M."/>
            <person name="Heim S."/>
            <person name="Kiewitz C."/>
            <person name="Eisen J.A."/>
            <person name="Timmis K.N."/>
            <person name="Duesterhoeft A."/>
            <person name="Tuemmler B."/>
            <person name="Fraser C.M."/>
        </authorList>
    </citation>
    <scope>NUCLEOTIDE SEQUENCE [LARGE SCALE GENOMIC DNA]</scope>
    <source>
        <strain>ATCC 47054 / DSM 6125 / CFBP 8728 / NCIMB 11950 / KT2440</strain>
    </source>
</reference>
<gene>
    <name type="primary">fdxA</name>
    <name type="ordered locus">PP_1625</name>
</gene>
<protein>
    <recommendedName>
        <fullName>Ferredoxin 1</fullName>
    </recommendedName>
</protein>
<accession>P0A122</accession>
<accession>P00213</accession>
<accession>Q9LBK3</accession>
<accession>Q9R9S8</accession>